<evidence type="ECO:0000250" key="1">
    <source>
        <dbReference type="UniProtKB" id="O75319"/>
    </source>
</evidence>
<evidence type="ECO:0000255" key="2"/>
<evidence type="ECO:0000255" key="3">
    <source>
        <dbReference type="PROSITE-ProRule" id="PRU00160"/>
    </source>
</evidence>
<evidence type="ECO:0000256" key="4">
    <source>
        <dbReference type="SAM" id="MobiDB-lite"/>
    </source>
</evidence>
<evidence type="ECO:0000305" key="5"/>
<reference key="1">
    <citation type="journal article" date="2005" name="Science">
        <title>The transcriptional landscape of the mammalian genome.</title>
        <authorList>
            <person name="Carninci P."/>
            <person name="Kasukawa T."/>
            <person name="Katayama S."/>
            <person name="Gough J."/>
            <person name="Frith M.C."/>
            <person name="Maeda N."/>
            <person name="Oyama R."/>
            <person name="Ravasi T."/>
            <person name="Lenhard B."/>
            <person name="Wells C."/>
            <person name="Kodzius R."/>
            <person name="Shimokawa K."/>
            <person name="Bajic V.B."/>
            <person name="Brenner S.E."/>
            <person name="Batalov S."/>
            <person name="Forrest A.R."/>
            <person name="Zavolan M."/>
            <person name="Davis M.J."/>
            <person name="Wilming L.G."/>
            <person name="Aidinis V."/>
            <person name="Allen J.E."/>
            <person name="Ambesi-Impiombato A."/>
            <person name="Apweiler R."/>
            <person name="Aturaliya R.N."/>
            <person name="Bailey T.L."/>
            <person name="Bansal M."/>
            <person name="Baxter L."/>
            <person name="Beisel K.W."/>
            <person name="Bersano T."/>
            <person name="Bono H."/>
            <person name="Chalk A.M."/>
            <person name="Chiu K.P."/>
            <person name="Choudhary V."/>
            <person name="Christoffels A."/>
            <person name="Clutterbuck D.R."/>
            <person name="Crowe M.L."/>
            <person name="Dalla E."/>
            <person name="Dalrymple B.P."/>
            <person name="de Bono B."/>
            <person name="Della Gatta G."/>
            <person name="di Bernardo D."/>
            <person name="Down T."/>
            <person name="Engstrom P."/>
            <person name="Fagiolini M."/>
            <person name="Faulkner G."/>
            <person name="Fletcher C.F."/>
            <person name="Fukushima T."/>
            <person name="Furuno M."/>
            <person name="Futaki S."/>
            <person name="Gariboldi M."/>
            <person name="Georgii-Hemming P."/>
            <person name="Gingeras T.R."/>
            <person name="Gojobori T."/>
            <person name="Green R.E."/>
            <person name="Gustincich S."/>
            <person name="Harbers M."/>
            <person name="Hayashi Y."/>
            <person name="Hensch T.K."/>
            <person name="Hirokawa N."/>
            <person name="Hill D."/>
            <person name="Huminiecki L."/>
            <person name="Iacono M."/>
            <person name="Ikeo K."/>
            <person name="Iwama A."/>
            <person name="Ishikawa T."/>
            <person name="Jakt M."/>
            <person name="Kanapin A."/>
            <person name="Katoh M."/>
            <person name="Kawasawa Y."/>
            <person name="Kelso J."/>
            <person name="Kitamura H."/>
            <person name="Kitano H."/>
            <person name="Kollias G."/>
            <person name="Krishnan S.P."/>
            <person name="Kruger A."/>
            <person name="Kummerfeld S.K."/>
            <person name="Kurochkin I.V."/>
            <person name="Lareau L.F."/>
            <person name="Lazarevic D."/>
            <person name="Lipovich L."/>
            <person name="Liu J."/>
            <person name="Liuni S."/>
            <person name="McWilliam S."/>
            <person name="Madan Babu M."/>
            <person name="Madera M."/>
            <person name="Marchionni L."/>
            <person name="Matsuda H."/>
            <person name="Matsuzawa S."/>
            <person name="Miki H."/>
            <person name="Mignone F."/>
            <person name="Miyake S."/>
            <person name="Morris K."/>
            <person name="Mottagui-Tabar S."/>
            <person name="Mulder N."/>
            <person name="Nakano N."/>
            <person name="Nakauchi H."/>
            <person name="Ng P."/>
            <person name="Nilsson R."/>
            <person name="Nishiguchi S."/>
            <person name="Nishikawa S."/>
            <person name="Nori F."/>
            <person name="Ohara O."/>
            <person name="Okazaki Y."/>
            <person name="Orlando V."/>
            <person name="Pang K.C."/>
            <person name="Pavan W.J."/>
            <person name="Pavesi G."/>
            <person name="Pesole G."/>
            <person name="Petrovsky N."/>
            <person name="Piazza S."/>
            <person name="Reed J."/>
            <person name="Reid J.F."/>
            <person name="Ring B.Z."/>
            <person name="Ringwald M."/>
            <person name="Rost B."/>
            <person name="Ruan Y."/>
            <person name="Salzberg S.L."/>
            <person name="Sandelin A."/>
            <person name="Schneider C."/>
            <person name="Schoenbach C."/>
            <person name="Sekiguchi K."/>
            <person name="Semple C.A."/>
            <person name="Seno S."/>
            <person name="Sessa L."/>
            <person name="Sheng Y."/>
            <person name="Shibata Y."/>
            <person name="Shimada H."/>
            <person name="Shimada K."/>
            <person name="Silva D."/>
            <person name="Sinclair B."/>
            <person name="Sperling S."/>
            <person name="Stupka E."/>
            <person name="Sugiura K."/>
            <person name="Sultana R."/>
            <person name="Takenaka Y."/>
            <person name="Taki K."/>
            <person name="Tammoja K."/>
            <person name="Tan S.L."/>
            <person name="Tang S."/>
            <person name="Taylor M.S."/>
            <person name="Tegner J."/>
            <person name="Teichmann S.A."/>
            <person name="Ueda H.R."/>
            <person name="van Nimwegen E."/>
            <person name="Verardo R."/>
            <person name="Wei C.L."/>
            <person name="Yagi K."/>
            <person name="Yamanishi H."/>
            <person name="Zabarovsky E."/>
            <person name="Zhu S."/>
            <person name="Zimmer A."/>
            <person name="Hide W."/>
            <person name="Bult C."/>
            <person name="Grimmond S.M."/>
            <person name="Teasdale R.D."/>
            <person name="Liu E.T."/>
            <person name="Brusic V."/>
            <person name="Quackenbush J."/>
            <person name="Wahlestedt C."/>
            <person name="Mattick J.S."/>
            <person name="Hume D.A."/>
            <person name="Kai C."/>
            <person name="Sasaki D."/>
            <person name="Tomaru Y."/>
            <person name="Fukuda S."/>
            <person name="Kanamori-Katayama M."/>
            <person name="Suzuki M."/>
            <person name="Aoki J."/>
            <person name="Arakawa T."/>
            <person name="Iida J."/>
            <person name="Imamura K."/>
            <person name="Itoh M."/>
            <person name="Kato T."/>
            <person name="Kawaji H."/>
            <person name="Kawagashira N."/>
            <person name="Kawashima T."/>
            <person name="Kojima M."/>
            <person name="Kondo S."/>
            <person name="Konno H."/>
            <person name="Nakano K."/>
            <person name="Ninomiya N."/>
            <person name="Nishio T."/>
            <person name="Okada M."/>
            <person name="Plessy C."/>
            <person name="Shibata K."/>
            <person name="Shiraki T."/>
            <person name="Suzuki S."/>
            <person name="Tagami M."/>
            <person name="Waki K."/>
            <person name="Watahiki A."/>
            <person name="Okamura-Oho Y."/>
            <person name="Suzuki H."/>
            <person name="Kawai J."/>
            <person name="Hayashizaki Y."/>
        </authorList>
    </citation>
    <scope>NUCLEOTIDE SEQUENCE [LARGE SCALE MRNA]</scope>
    <source>
        <strain>NOD</strain>
        <tissue>Thymus</tissue>
    </source>
</reference>
<reference key="2">
    <citation type="journal article" date="2004" name="Genome Res.">
        <title>The status, quality, and expansion of the NIH full-length cDNA project: the Mammalian Gene Collection (MGC).</title>
        <authorList>
            <consortium name="The MGC Project Team"/>
        </authorList>
    </citation>
    <scope>NUCLEOTIDE SEQUENCE [LARGE SCALE MRNA]</scope>
    <source>
        <strain>C57BL/6J</strain>
        <tissue>Brain</tissue>
    </source>
</reference>
<accession>Q6NXK5</accession>
<accession>Q8BTR4</accession>
<accession>Q8BYE4</accession>
<protein>
    <recommendedName>
        <fullName>RNA/RNP complex-1-interacting phosphatase</fullName>
        <ecNumber>3.1.3.-</ecNumber>
    </recommendedName>
    <alternativeName>
        <fullName>Dual specificity protein phosphatase 11</fullName>
    </alternativeName>
    <alternativeName>
        <fullName>Phosphatase that interacts with RNA/RNP complex 1</fullName>
    </alternativeName>
</protein>
<organism>
    <name type="scientific">Mus musculus</name>
    <name type="common">Mouse</name>
    <dbReference type="NCBI Taxonomy" id="10090"/>
    <lineage>
        <taxon>Eukaryota</taxon>
        <taxon>Metazoa</taxon>
        <taxon>Chordata</taxon>
        <taxon>Craniata</taxon>
        <taxon>Vertebrata</taxon>
        <taxon>Euteleostomi</taxon>
        <taxon>Mammalia</taxon>
        <taxon>Eutheria</taxon>
        <taxon>Euarchontoglires</taxon>
        <taxon>Glires</taxon>
        <taxon>Rodentia</taxon>
        <taxon>Myomorpha</taxon>
        <taxon>Muroidea</taxon>
        <taxon>Muridae</taxon>
        <taxon>Murinae</taxon>
        <taxon>Mus</taxon>
        <taxon>Mus</taxon>
    </lineage>
</organism>
<name>DUS11_MOUSE</name>
<comment type="function">
    <text evidence="1">Possesses RNA 5'-triphosphatase and diphosphatase activities, but displays a poor protein-tyrosine phosphatase activity. In addition, has phosphatase activity with ATP, ADP and O-methylfluorescein phosphate (in vitro). Binds to RNA. May participate in nuclear mRNA metabolism.</text>
</comment>
<comment type="subunit">
    <text evidence="1">Monomer. May interact with SFRS7 and SFRS9/SRP30C.</text>
</comment>
<comment type="subcellular location">
    <subcellularLocation>
        <location evidence="1">Nucleus</location>
    </subcellularLocation>
    <subcellularLocation>
        <location evidence="1">Nucleus speckle</location>
    </subcellularLocation>
</comment>
<comment type="similarity">
    <text evidence="5">Belongs to the protein-tyrosine phosphatase family. Non-receptor class dual specificity subfamily.</text>
</comment>
<feature type="chain" id="PRO_0000094817" description="RNA/RNP complex-1-interacting phosphatase">
    <location>
        <begin position="1"/>
        <end position="321"/>
    </location>
</feature>
<feature type="domain" description="Tyrosine-protein phosphatase" evidence="3">
    <location>
        <begin position="60"/>
        <end position="207"/>
    </location>
</feature>
<feature type="region of interest" description="Disordered" evidence="4">
    <location>
        <begin position="1"/>
        <end position="27"/>
    </location>
</feature>
<feature type="region of interest" description="Disordered" evidence="4">
    <location>
        <begin position="205"/>
        <end position="262"/>
    </location>
</feature>
<feature type="compositionally biased region" description="Basic residues" evidence="4">
    <location>
        <begin position="1"/>
        <end position="11"/>
    </location>
</feature>
<feature type="compositionally biased region" description="Basic residues" evidence="4">
    <location>
        <begin position="233"/>
        <end position="245"/>
    </location>
</feature>
<feature type="compositionally biased region" description="Polar residues" evidence="4">
    <location>
        <begin position="251"/>
        <end position="262"/>
    </location>
</feature>
<feature type="active site" description="Phosphocysteine intermediate" evidence="3">
    <location>
        <position position="151"/>
    </location>
</feature>
<feature type="active site" description="Proton donor/acceptor" evidence="2">
    <location>
        <position position="157"/>
    </location>
</feature>
<feature type="binding site" evidence="1">
    <location>
        <begin position="152"/>
        <end position="157"/>
    </location>
    <ligand>
        <name>substrate</name>
    </ligand>
</feature>
<feature type="sequence conflict" description="In Ref. 1; BAC40665." evidence="5" ref="1">
    <original>G</original>
    <variation>A</variation>
    <location>
        <position position="159"/>
    </location>
</feature>
<feature type="sequence conflict" description="In Ref. 1; BAC40665." evidence="5" ref="1">
    <original>R</original>
    <variation>T</variation>
    <location>
        <position position="173"/>
    </location>
</feature>
<feature type="sequence conflict" description="In Ref. 1; BAC40665." evidence="5" ref="1">
    <original>I</original>
    <variation>N</variation>
    <location>
        <position position="178"/>
    </location>
</feature>
<feature type="sequence conflict" description="In Ref. 1; BAC40665." evidence="5" ref="1">
    <original>N</original>
    <variation>D</variation>
    <location>
        <position position="193"/>
    </location>
</feature>
<feature type="sequence conflict" description="In Ref. 1; BAC40665." evidence="5" ref="1">
    <original>K</original>
    <variation>E</variation>
    <location>
        <position position="237"/>
    </location>
</feature>
<keyword id="KW-0378">Hydrolase</keyword>
<keyword id="KW-0539">Nucleus</keyword>
<keyword id="KW-0904">Protein phosphatase</keyword>
<keyword id="KW-1185">Reference proteome</keyword>
<keyword id="KW-0694">RNA-binding</keyword>
<sequence length="321" mass="37851">MNQHYGRHGRGRGRDFAACAPPKKKGRNHIPERWKDYLPVGQRMPGTRFIAFKVPLQKKFEAKLMPEECFSPLDLFNKIQEQNEELGLIIDLTYTQRYYKVEDLPETISYIKIFTVGHQIPDNDTIFQFKCAVKEFLKKNKNNDKLIGVHCTHGLNRTGYLICRYLIDVEGMRPDDAIELFNSCRGHCIERQNYIENLQKRHVRKNRNVSAPRTDGLEDSADPTEQVYTNNKPVKKKPRKNRRGGHLAPSQHFQHQTQSSPYSLRKWSQNQSVYQRGLVPPPGPAGEDYSQRRFFWSARPNKWTAESYQRPFYPYYWEWNL</sequence>
<gene>
    <name type="primary">Dusp11</name>
    <name type="synonym">Pir1</name>
</gene>
<dbReference type="EC" id="3.1.3.-"/>
<dbReference type="EMBL" id="AK040232">
    <property type="protein sequence ID" value="BAC30546.1"/>
    <property type="molecule type" value="mRNA"/>
</dbReference>
<dbReference type="EMBL" id="AK088941">
    <property type="protein sequence ID" value="BAC40665.1"/>
    <property type="molecule type" value="mRNA"/>
</dbReference>
<dbReference type="EMBL" id="BC067028">
    <property type="protein sequence ID" value="AAH67028.1"/>
    <property type="molecule type" value="mRNA"/>
</dbReference>
<dbReference type="CCDS" id="CCDS20306.1"/>
<dbReference type="RefSeq" id="NP_082375.4">
    <property type="nucleotide sequence ID" value="NM_028099.4"/>
</dbReference>
<dbReference type="SMR" id="Q6NXK5"/>
<dbReference type="FunCoup" id="Q6NXK5">
    <property type="interactions" value="2641"/>
</dbReference>
<dbReference type="STRING" id="10090.ENSMUSP00000032071"/>
<dbReference type="iPTMnet" id="Q6NXK5"/>
<dbReference type="PhosphoSitePlus" id="Q6NXK5"/>
<dbReference type="PaxDb" id="10090-ENSMUSP00000032071"/>
<dbReference type="PeptideAtlas" id="Q6NXK5"/>
<dbReference type="ProteomicsDB" id="279820"/>
<dbReference type="Pumba" id="Q6NXK5"/>
<dbReference type="Antibodypedia" id="31366">
    <property type="antibodies" value="115 antibodies from 24 providers"/>
</dbReference>
<dbReference type="DNASU" id="72102"/>
<dbReference type="Ensembl" id="ENSMUST00000032071.13">
    <property type="protein sequence ID" value="ENSMUSP00000032071.10"/>
    <property type="gene ID" value="ENSMUSG00000030002.16"/>
</dbReference>
<dbReference type="GeneID" id="72102"/>
<dbReference type="KEGG" id="mmu:72102"/>
<dbReference type="UCSC" id="uc009cqp.1">
    <property type="organism name" value="mouse"/>
</dbReference>
<dbReference type="AGR" id="MGI:1919352"/>
<dbReference type="CTD" id="8446"/>
<dbReference type="MGI" id="MGI:1919352">
    <property type="gene designation" value="Dusp11"/>
</dbReference>
<dbReference type="VEuPathDB" id="HostDB:ENSMUSG00000030002"/>
<dbReference type="eggNOG" id="KOG2386">
    <property type="taxonomic scope" value="Eukaryota"/>
</dbReference>
<dbReference type="GeneTree" id="ENSGT00940000155847"/>
<dbReference type="HOGENOM" id="CLU_057587_1_1_1"/>
<dbReference type="InParanoid" id="Q6NXK5"/>
<dbReference type="OMA" id="NRIPERW"/>
<dbReference type="OrthoDB" id="428974at2759"/>
<dbReference type="PhylomeDB" id="Q6NXK5"/>
<dbReference type="TreeFam" id="TF105124"/>
<dbReference type="BioGRID-ORCS" id="72102">
    <property type="hits" value="4 hits in 80 CRISPR screens"/>
</dbReference>
<dbReference type="ChiTaRS" id="Dusp11">
    <property type="organism name" value="mouse"/>
</dbReference>
<dbReference type="PRO" id="PR:Q6NXK5"/>
<dbReference type="Proteomes" id="UP000000589">
    <property type="component" value="Chromosome 6"/>
</dbReference>
<dbReference type="RNAct" id="Q6NXK5">
    <property type="molecule type" value="protein"/>
</dbReference>
<dbReference type="Bgee" id="ENSMUSG00000030002">
    <property type="expression patterns" value="Expressed in retinal neural layer and 259 other cell types or tissues"/>
</dbReference>
<dbReference type="ExpressionAtlas" id="Q6NXK5">
    <property type="expression patterns" value="baseline and differential"/>
</dbReference>
<dbReference type="GO" id="GO:0001650">
    <property type="term" value="C:fibrillar center"/>
    <property type="evidence" value="ECO:0007669"/>
    <property type="project" value="Ensembl"/>
</dbReference>
<dbReference type="GO" id="GO:0045171">
    <property type="term" value="C:intercellular bridge"/>
    <property type="evidence" value="ECO:0007669"/>
    <property type="project" value="Ensembl"/>
</dbReference>
<dbReference type="GO" id="GO:0016607">
    <property type="term" value="C:nuclear speck"/>
    <property type="evidence" value="ECO:0000250"/>
    <property type="project" value="UniProtKB"/>
</dbReference>
<dbReference type="GO" id="GO:0016791">
    <property type="term" value="F:phosphatase activity"/>
    <property type="evidence" value="ECO:0000250"/>
    <property type="project" value="UniProtKB"/>
</dbReference>
<dbReference type="GO" id="GO:0004651">
    <property type="term" value="F:polynucleotide 5'-phosphatase activity"/>
    <property type="evidence" value="ECO:0000250"/>
    <property type="project" value="UniProtKB"/>
</dbReference>
<dbReference type="GO" id="GO:0004725">
    <property type="term" value="F:protein tyrosine phosphatase activity"/>
    <property type="evidence" value="ECO:0007669"/>
    <property type="project" value="Ensembl"/>
</dbReference>
<dbReference type="GO" id="GO:0003723">
    <property type="term" value="F:RNA binding"/>
    <property type="evidence" value="ECO:0007669"/>
    <property type="project" value="UniProtKB-KW"/>
</dbReference>
<dbReference type="CDD" id="cd17665">
    <property type="entry name" value="DSP_DUSP11"/>
    <property type="match status" value="1"/>
</dbReference>
<dbReference type="FunFam" id="3.90.190.10:FF:000064">
    <property type="entry name" value="RNA/RNP complex-1-interacting phosphatase homolog"/>
    <property type="match status" value="1"/>
</dbReference>
<dbReference type="Gene3D" id="3.90.190.10">
    <property type="entry name" value="Protein tyrosine phosphatase superfamily"/>
    <property type="match status" value="1"/>
</dbReference>
<dbReference type="InterPro" id="IPR000340">
    <property type="entry name" value="Dual-sp_phosphatase_cat-dom"/>
</dbReference>
<dbReference type="InterPro" id="IPR051029">
    <property type="entry name" value="mRNA_Capping_Enz/RNA_Phosphat"/>
</dbReference>
<dbReference type="InterPro" id="IPR029021">
    <property type="entry name" value="Prot-tyrosine_phosphatase-like"/>
</dbReference>
<dbReference type="InterPro" id="IPR016130">
    <property type="entry name" value="Tyr_Pase_AS"/>
</dbReference>
<dbReference type="InterPro" id="IPR000387">
    <property type="entry name" value="Tyr_Pase_dom"/>
</dbReference>
<dbReference type="InterPro" id="IPR020422">
    <property type="entry name" value="TYR_PHOSPHATASE_DUAL_dom"/>
</dbReference>
<dbReference type="PANTHER" id="PTHR10367">
    <property type="entry name" value="MRNA-CAPPING ENZYME"/>
    <property type="match status" value="1"/>
</dbReference>
<dbReference type="PANTHER" id="PTHR10367:SF18">
    <property type="entry name" value="RNA_RNP COMPLEX-1-INTERACTING PHOSPHATASE"/>
    <property type="match status" value="1"/>
</dbReference>
<dbReference type="Pfam" id="PF00782">
    <property type="entry name" value="DSPc"/>
    <property type="match status" value="1"/>
</dbReference>
<dbReference type="SMART" id="SM00195">
    <property type="entry name" value="DSPc"/>
    <property type="match status" value="1"/>
</dbReference>
<dbReference type="SUPFAM" id="SSF52799">
    <property type="entry name" value="(Phosphotyrosine protein) phosphatases II"/>
    <property type="match status" value="1"/>
</dbReference>
<dbReference type="PROSITE" id="PS00383">
    <property type="entry name" value="TYR_PHOSPHATASE_1"/>
    <property type="match status" value="1"/>
</dbReference>
<dbReference type="PROSITE" id="PS50056">
    <property type="entry name" value="TYR_PHOSPHATASE_2"/>
    <property type="match status" value="1"/>
</dbReference>
<dbReference type="PROSITE" id="PS50054">
    <property type="entry name" value="TYR_PHOSPHATASE_DUAL"/>
    <property type="match status" value="1"/>
</dbReference>
<proteinExistence type="evidence at transcript level"/>